<comment type="function">
    <text evidence="1">A beta subtype methylase, recognizes the double-stranded sequence 5'-GCCNNNNNGGC-3', methylates C-2 on both strands, and protects the DNA from cleavage by the BglI endonuclease.</text>
</comment>
<comment type="catalytic activity">
    <reaction>
        <text>a 2'-deoxycytidine in DNA + S-adenosyl-L-methionine = an N(4)-methyl-2'-deoxycytidine in DNA + S-adenosyl-L-homocysteine + H(+)</text>
        <dbReference type="Rhea" id="RHEA:16857"/>
        <dbReference type="Rhea" id="RHEA-COMP:11369"/>
        <dbReference type="Rhea" id="RHEA-COMP:13674"/>
        <dbReference type="ChEBI" id="CHEBI:15378"/>
        <dbReference type="ChEBI" id="CHEBI:57856"/>
        <dbReference type="ChEBI" id="CHEBI:59789"/>
        <dbReference type="ChEBI" id="CHEBI:85452"/>
        <dbReference type="ChEBI" id="CHEBI:137933"/>
        <dbReference type="EC" id="2.1.1.113"/>
    </reaction>
</comment>
<comment type="similarity">
    <text evidence="2">Belongs to the N(4)/N(6)-methyltransferase family.</text>
</comment>
<organism>
    <name type="scientific">Bacillus subtilis</name>
    <dbReference type="NCBI Taxonomy" id="1423"/>
    <lineage>
        <taxon>Bacteria</taxon>
        <taxon>Bacillati</taxon>
        <taxon>Bacillota</taxon>
        <taxon>Bacilli</taxon>
        <taxon>Bacillales</taxon>
        <taxon>Bacillaceae</taxon>
        <taxon>Bacillus</taxon>
    </lineage>
</organism>
<sequence length="348" mass="40242">MNNHSYLKKNSFHEGDARELLKCIEEESIALSVWSPPYHVGKKYEEGQTYEQWSSLLTKVIALHYPILKPGGFLVINIDDILAFPDPRMPRFQAVNLKKHRVSVTREDILNALKLEPELTKYQLAKKFNCSEQTIERRLKGNNIRGGKYNVQTKVKLAGPVLEKAAEEAGLYLYDRRIWAKDPAWQNSQWHSNSYKAVSEFEHLYIFWKPGETVIDRNKLSKEEWASWASRGIWYIPSVRKNDDHEAKFPLLLPQRLIKLLTQKGDTVLDCFMGSGTTAVAALSESRNFIGIEKEPKYIQLSNKNVETFYISRNKEASKIKETNHSVTDEKKKAEQLELLLEENENSL</sequence>
<gene>
    <name type="primary">bglIM</name>
</gene>
<reference key="1">
    <citation type="journal article" date="1998" name="EMBO J.">
        <title>Crystal structure of restriction endonuclease BglI bound to its interrupted DNA recognition sequence.</title>
        <authorList>
            <person name="Newman M."/>
            <person name="Lunnen K.D."/>
            <person name="Wilson G.G."/>
            <person name="Greci J."/>
            <person name="Schildkraut I."/>
            <person name="Philips S.E.V."/>
        </authorList>
    </citation>
    <scope>NUCLEOTIDE SEQUENCE [GENOMIC DNA]</scope>
</reference>
<reference key="2">
    <citation type="journal article" date="2003" name="Nucleic Acids Res.">
        <title>A nomenclature for restriction enzymes, DNA methyltransferases, homing endonucleases and their genes.</title>
        <authorList>
            <person name="Roberts R.J."/>
            <person name="Belfort M."/>
            <person name="Bestor T."/>
            <person name="Bhagwat A.S."/>
            <person name="Bickle T.A."/>
            <person name="Bitinaite J."/>
            <person name="Blumenthal R.M."/>
            <person name="Degtyarev S.K."/>
            <person name="Dryden D.T."/>
            <person name="Dybvig K."/>
            <person name="Firman K."/>
            <person name="Gromova E.S."/>
            <person name="Gumport R.I."/>
            <person name="Halford S.E."/>
            <person name="Hattman S."/>
            <person name="Heitman J."/>
            <person name="Hornby D.P."/>
            <person name="Janulaitis A."/>
            <person name="Jeltsch A."/>
            <person name="Josephsen J."/>
            <person name="Kiss A."/>
            <person name="Klaenhammer T.R."/>
            <person name="Kobayashi I."/>
            <person name="Kong H."/>
            <person name="Krueger D.H."/>
            <person name="Lacks S."/>
            <person name="Marinus M.G."/>
            <person name="Miyahara M."/>
            <person name="Morgan R.D."/>
            <person name="Murray N.E."/>
            <person name="Nagaraja V."/>
            <person name="Piekarowicz A."/>
            <person name="Pingoud A."/>
            <person name="Raleigh E."/>
            <person name="Rao D.N."/>
            <person name="Reich N."/>
            <person name="Repin V.E."/>
            <person name="Selker E.U."/>
            <person name="Shaw P.C."/>
            <person name="Stein D.C."/>
            <person name="Stoddard B.L."/>
            <person name="Szybalski W."/>
            <person name="Trautner T.A."/>
            <person name="Van Etten J.L."/>
            <person name="Vitor J.M."/>
            <person name="Wilson G.G."/>
            <person name="Xu S.Y."/>
        </authorList>
    </citation>
    <scope>NOMENCLATURE</scope>
    <scope>SUBTYPE</scope>
</reference>
<feature type="chain" id="PRO_0000087923" description="Type II methyltransferase M.BglI">
    <location>
        <begin position="1"/>
        <end position="348"/>
    </location>
</feature>
<keyword id="KW-0238">DNA-binding</keyword>
<keyword id="KW-0489">Methyltransferase</keyword>
<keyword id="KW-0680">Restriction system</keyword>
<keyword id="KW-0949">S-adenosyl-L-methionine</keyword>
<keyword id="KW-0808">Transferase</keyword>
<accession>O68556</accession>
<dbReference type="EC" id="2.1.1.113"/>
<dbReference type="EMBL" id="AF050216">
    <property type="protein sequence ID" value="AAC63974.1"/>
    <property type="molecule type" value="Genomic_DNA"/>
</dbReference>
<dbReference type="SMR" id="O68556"/>
<dbReference type="REBASE" id="290972">
    <property type="entry name" value="M.Msa27082ORF4227P"/>
</dbReference>
<dbReference type="BRENDA" id="2.1.1.113">
    <property type="organism ID" value="658"/>
</dbReference>
<dbReference type="PRO" id="PR:O68556"/>
<dbReference type="GO" id="GO:0003677">
    <property type="term" value="F:DNA binding"/>
    <property type="evidence" value="ECO:0007669"/>
    <property type="project" value="UniProtKB-KW"/>
</dbReference>
<dbReference type="GO" id="GO:0008170">
    <property type="term" value="F:N-methyltransferase activity"/>
    <property type="evidence" value="ECO:0007669"/>
    <property type="project" value="InterPro"/>
</dbReference>
<dbReference type="GO" id="GO:0015667">
    <property type="term" value="F:site-specific DNA-methyltransferase (cytosine-N4-specific) activity"/>
    <property type="evidence" value="ECO:0007669"/>
    <property type="project" value="UniProtKB-EC"/>
</dbReference>
<dbReference type="GO" id="GO:0009307">
    <property type="term" value="P:DNA restriction-modification system"/>
    <property type="evidence" value="ECO:0007669"/>
    <property type="project" value="UniProtKB-KW"/>
</dbReference>
<dbReference type="GO" id="GO:0032259">
    <property type="term" value="P:methylation"/>
    <property type="evidence" value="ECO:0007669"/>
    <property type="project" value="UniProtKB-KW"/>
</dbReference>
<dbReference type="Gene3D" id="3.40.50.150">
    <property type="entry name" value="Vaccinia Virus protein VP39"/>
    <property type="match status" value="1"/>
</dbReference>
<dbReference type="Gene3D" id="1.10.10.10">
    <property type="entry name" value="Winged helix-like DNA-binding domain superfamily/Winged helix DNA-binding domain"/>
    <property type="match status" value="1"/>
</dbReference>
<dbReference type="InterPro" id="IPR002941">
    <property type="entry name" value="DNA_methylase_N4/N6"/>
</dbReference>
<dbReference type="InterPro" id="IPR001091">
    <property type="entry name" value="RM_Methyltransferase"/>
</dbReference>
<dbReference type="InterPro" id="IPR029063">
    <property type="entry name" value="SAM-dependent_MTases_sf"/>
</dbReference>
<dbReference type="InterPro" id="IPR036388">
    <property type="entry name" value="WH-like_DNA-bd_sf"/>
</dbReference>
<dbReference type="Pfam" id="PF01555">
    <property type="entry name" value="N6_N4_Mtase"/>
    <property type="match status" value="1"/>
</dbReference>
<dbReference type="PRINTS" id="PR00508">
    <property type="entry name" value="S21N4MTFRASE"/>
</dbReference>
<dbReference type="SUPFAM" id="SSF53335">
    <property type="entry name" value="S-adenosyl-L-methionine-dependent methyltransferases"/>
    <property type="match status" value="1"/>
</dbReference>
<proteinExistence type="inferred from homology"/>
<protein>
    <recommendedName>
        <fullName evidence="1">Type II methyltransferase M.BglI</fullName>
        <shortName evidence="1">M.BglI</shortName>
        <ecNumber>2.1.1.113</ecNumber>
    </recommendedName>
    <alternativeName>
        <fullName>BglI modification methyltransferase</fullName>
    </alternativeName>
    <alternativeName>
        <fullName>Modification methylase BglI</fullName>
    </alternativeName>
    <alternativeName>
        <fullName>N(4)- cytosine-specific methyltransferase BglI</fullName>
    </alternativeName>
</protein>
<name>MTB1_BACIU</name>
<evidence type="ECO:0000303" key="1">
    <source>
    </source>
</evidence>
<evidence type="ECO:0000305" key="2"/>